<sequence>MVLSTEENTGVDSVNLPSGETGLGEKDQESVNNLCSQYEEKVRPCIDLIDSLRALGVEQDLALPAIAVIGDQSSGKSSVLEALSGVALPRGSGIVTRCPLVLKLRKLNEGEEWRGKVSYDDIEVELSDPSEVEEAINKGQNFIAGVGLGISDKLISLDVSSPNVPDLTLIDLPGITRVAVGNQPADIGRQIKRLIKTYIQKQETINLVVVPSNVDIATTEALSMAQEVDPEGDRTIGILTKPDLVDRGTEDKVVDVVRNLVYHLKKGYMIVKCRGQQDIQEQLSLTEALQNEQIFFKEHPHFRVLLEDGKATVPCLAERLTAELISHICKSLPLLENQIKESHQSASEELQKYGMDIPEDDSEKTFFLIEKINAFNQDITALVQGEENVAEGECRLFTRLRKEFLSWSKEIEKNFAKGYAVLYNEVWAFEKQYRGRELPGFVNYKTFENIIRRQIKTLEEPAIEMLHTVTEIVRAAFTSVSEKNFSEFYNLHRTTKSKLEDIRLEQEKEAEMSIRLHFKMEQIIYCQDQIYRGALQKVREEEAEEEKKTKHGTSSSSQSQDLQTSSMAEIFQHLNAYRQEAHNRISSHVPLIIQYFILKMFAERLQKGMLQLLQDKDSCSWLLKEQSDTSEKRKFLKERLARLAQARRRLAKFPG</sequence>
<feature type="chain" id="PRO_0000206599" description="Interferon-induced GTP-binding protein Mx2">
    <location>
        <begin position="1"/>
        <end position="655"/>
    </location>
</feature>
<feature type="domain" description="Dynamin-type G" evidence="3">
    <location>
        <begin position="60"/>
        <end position="333"/>
    </location>
</feature>
<feature type="domain" description="GED" evidence="2">
    <location>
        <begin position="567"/>
        <end position="655"/>
    </location>
</feature>
<feature type="region of interest" description="Disordered" evidence="4">
    <location>
        <begin position="1"/>
        <end position="28"/>
    </location>
</feature>
<feature type="region of interest" description="G1 motif" evidence="3">
    <location>
        <begin position="70"/>
        <end position="77"/>
    </location>
</feature>
<feature type="region of interest" description="G2 motif" evidence="3">
    <location>
        <begin position="95"/>
        <end position="97"/>
    </location>
</feature>
<feature type="region of interest" description="G3 motif" evidence="3">
    <location>
        <begin position="171"/>
        <end position="174"/>
    </location>
</feature>
<feature type="region of interest" description="G4 motif" evidence="3">
    <location>
        <begin position="240"/>
        <end position="243"/>
    </location>
</feature>
<feature type="region of interest" description="G5 motif" evidence="3">
    <location>
        <begin position="272"/>
        <end position="275"/>
    </location>
</feature>
<feature type="region of interest" description="Disordered" evidence="4">
    <location>
        <begin position="542"/>
        <end position="562"/>
    </location>
</feature>
<feature type="compositionally biased region" description="Polar residues" evidence="4">
    <location>
        <begin position="1"/>
        <end position="18"/>
    </location>
</feature>
<feature type="compositionally biased region" description="Low complexity" evidence="4">
    <location>
        <begin position="552"/>
        <end position="562"/>
    </location>
</feature>
<feature type="binding site" evidence="1">
    <location>
        <begin position="70"/>
        <end position="77"/>
    </location>
    <ligand>
        <name>GTP</name>
        <dbReference type="ChEBI" id="CHEBI:37565"/>
    </ligand>
</feature>
<feature type="binding site" evidence="1">
    <location>
        <begin position="171"/>
        <end position="175"/>
    </location>
    <ligand>
        <name>GTP</name>
        <dbReference type="ChEBI" id="CHEBI:37565"/>
    </ligand>
</feature>
<feature type="binding site" evidence="1">
    <location>
        <begin position="240"/>
        <end position="243"/>
    </location>
    <ligand>
        <name>GTP</name>
        <dbReference type="ChEBI" id="CHEBI:37565"/>
    </ligand>
</feature>
<feature type="sequence conflict" description="In Ref. 1; BAA82593." evidence="8" ref="1">
    <original>S</original>
    <variation>L</variation>
    <location>
        <position position="326"/>
    </location>
</feature>
<keyword id="KW-0051">Antiviral defense</keyword>
<keyword id="KW-0963">Cytoplasm</keyword>
<keyword id="KW-0342">GTP-binding</keyword>
<keyword id="KW-0391">Immunity</keyword>
<keyword id="KW-0399">Innate immunity</keyword>
<keyword id="KW-0547">Nucleotide-binding</keyword>
<keyword id="KW-1185">Reference proteome</keyword>
<dbReference type="EMBL" id="AB029920">
    <property type="protein sequence ID" value="BAA82593.1"/>
    <property type="molecule type" value="mRNA"/>
</dbReference>
<dbReference type="EMBL" id="BC007127">
    <property type="protein sequence ID" value="AAH07127.1"/>
    <property type="molecule type" value="mRNA"/>
</dbReference>
<dbReference type="RefSeq" id="NP_038634.1">
    <property type="nucleotide sequence ID" value="NM_013606.1"/>
</dbReference>
<dbReference type="SMR" id="Q9WVP9"/>
<dbReference type="FunCoup" id="Q9WVP9">
    <property type="interactions" value="233"/>
</dbReference>
<dbReference type="IntAct" id="Q9WVP9">
    <property type="interactions" value="2"/>
</dbReference>
<dbReference type="MINT" id="Q9WVP9"/>
<dbReference type="iPTMnet" id="Q9WVP9"/>
<dbReference type="PhosphoSitePlus" id="Q9WVP9"/>
<dbReference type="jPOST" id="Q9WVP9"/>
<dbReference type="ProteomicsDB" id="286089"/>
<dbReference type="DNASU" id="17858"/>
<dbReference type="GeneID" id="17858"/>
<dbReference type="KEGG" id="mmu:17858"/>
<dbReference type="AGR" id="MGI:97244"/>
<dbReference type="CTD" id="4600"/>
<dbReference type="MGI" id="MGI:97244">
    <property type="gene designation" value="Mx2"/>
</dbReference>
<dbReference type="VEuPathDB" id="HostDB:ENSMUSG00000023341"/>
<dbReference type="HOGENOM" id="CLU_008964_8_0_1"/>
<dbReference type="InParanoid" id="Q9WVP9"/>
<dbReference type="OMA" id="EFHKWSA"/>
<dbReference type="PhylomeDB" id="Q9WVP9"/>
<dbReference type="TreeFam" id="TF331484"/>
<dbReference type="Reactome" id="R-MMU-1169408">
    <property type="pathway name" value="ISG15 antiviral mechanism"/>
</dbReference>
<dbReference type="BioGRID-ORCS" id="17858">
    <property type="hits" value="0 hits in 22 CRISPR screens"/>
</dbReference>
<dbReference type="PRO" id="PR:Q9WVP9"/>
<dbReference type="Proteomes" id="UP000000589">
    <property type="component" value="Chromosome 16"/>
</dbReference>
<dbReference type="RNAct" id="Q9WVP9">
    <property type="molecule type" value="protein"/>
</dbReference>
<dbReference type="Bgee" id="ENSMUSG00000023341">
    <property type="expression patterns" value="Expressed in small intestine Peyer's patch and 69 other cell types or tissues"/>
</dbReference>
<dbReference type="GO" id="GO:0005737">
    <property type="term" value="C:cytoplasm"/>
    <property type="evidence" value="ECO:0000304"/>
    <property type="project" value="MGI"/>
</dbReference>
<dbReference type="GO" id="GO:0005525">
    <property type="term" value="F:GTP binding"/>
    <property type="evidence" value="ECO:0000304"/>
    <property type="project" value="MGI"/>
</dbReference>
<dbReference type="GO" id="GO:0003924">
    <property type="term" value="F:GTPase activity"/>
    <property type="evidence" value="ECO:0000304"/>
    <property type="project" value="MGI"/>
</dbReference>
<dbReference type="GO" id="GO:0051607">
    <property type="term" value="P:defense response to virus"/>
    <property type="evidence" value="ECO:0007669"/>
    <property type="project" value="UniProtKB-KW"/>
</dbReference>
<dbReference type="GO" id="GO:0045087">
    <property type="term" value="P:innate immune response"/>
    <property type="evidence" value="ECO:0000304"/>
    <property type="project" value="MGI"/>
</dbReference>
<dbReference type="GO" id="GO:0045071">
    <property type="term" value="P:negative regulation of viral genome replication"/>
    <property type="evidence" value="ECO:0000314"/>
    <property type="project" value="UniProtKB"/>
</dbReference>
<dbReference type="GO" id="GO:0009617">
    <property type="term" value="P:response to bacterium"/>
    <property type="evidence" value="ECO:0000270"/>
    <property type="project" value="MGI"/>
</dbReference>
<dbReference type="GO" id="GO:0034340">
    <property type="term" value="P:response to type I interferon"/>
    <property type="evidence" value="ECO:0000314"/>
    <property type="project" value="UniProtKB"/>
</dbReference>
<dbReference type="GO" id="GO:0009615">
    <property type="term" value="P:response to virus"/>
    <property type="evidence" value="ECO:0000314"/>
    <property type="project" value="UniProtKB"/>
</dbReference>
<dbReference type="CDD" id="cd08771">
    <property type="entry name" value="DLP_1"/>
    <property type="match status" value="1"/>
</dbReference>
<dbReference type="FunFam" id="1.20.120.1240:FF:000007">
    <property type="entry name" value="Interferon-induced GTP-binding protein Mx1"/>
    <property type="match status" value="1"/>
</dbReference>
<dbReference type="FunFam" id="3.40.50.300:FF:000621">
    <property type="entry name" value="Interferon-induced GTP-binding protein Mx1"/>
    <property type="match status" value="1"/>
</dbReference>
<dbReference type="Gene3D" id="1.20.120.1240">
    <property type="entry name" value="Dynamin, middle domain"/>
    <property type="match status" value="1"/>
</dbReference>
<dbReference type="Gene3D" id="3.40.50.300">
    <property type="entry name" value="P-loop containing nucleotide triphosphate hydrolases"/>
    <property type="match status" value="1"/>
</dbReference>
<dbReference type="InterPro" id="IPR022812">
    <property type="entry name" value="Dynamin"/>
</dbReference>
<dbReference type="InterPro" id="IPR001401">
    <property type="entry name" value="Dynamin_GTPase"/>
</dbReference>
<dbReference type="InterPro" id="IPR019762">
    <property type="entry name" value="Dynamin_GTPase_CS"/>
</dbReference>
<dbReference type="InterPro" id="IPR045063">
    <property type="entry name" value="Dynamin_N"/>
</dbReference>
<dbReference type="InterPro" id="IPR000375">
    <property type="entry name" value="Dynamin_stalk"/>
</dbReference>
<dbReference type="InterPro" id="IPR030381">
    <property type="entry name" value="G_DYNAMIN_dom"/>
</dbReference>
<dbReference type="InterPro" id="IPR003130">
    <property type="entry name" value="GED"/>
</dbReference>
<dbReference type="InterPro" id="IPR020850">
    <property type="entry name" value="GED_dom"/>
</dbReference>
<dbReference type="InterPro" id="IPR027417">
    <property type="entry name" value="P-loop_NTPase"/>
</dbReference>
<dbReference type="PANTHER" id="PTHR11566">
    <property type="entry name" value="DYNAMIN"/>
    <property type="match status" value="1"/>
</dbReference>
<dbReference type="PANTHER" id="PTHR11566:SF217">
    <property type="entry name" value="INTERFERON-INDUCED GTP-BINDING PROTEIN MX1"/>
    <property type="match status" value="1"/>
</dbReference>
<dbReference type="Pfam" id="PF01031">
    <property type="entry name" value="Dynamin_M"/>
    <property type="match status" value="1"/>
</dbReference>
<dbReference type="Pfam" id="PF00350">
    <property type="entry name" value="Dynamin_N"/>
    <property type="match status" value="1"/>
</dbReference>
<dbReference type="Pfam" id="PF02212">
    <property type="entry name" value="GED"/>
    <property type="match status" value="1"/>
</dbReference>
<dbReference type="PRINTS" id="PR00195">
    <property type="entry name" value="DYNAMIN"/>
</dbReference>
<dbReference type="SMART" id="SM00053">
    <property type="entry name" value="DYNc"/>
    <property type="match status" value="1"/>
</dbReference>
<dbReference type="SMART" id="SM00302">
    <property type="entry name" value="GED"/>
    <property type="match status" value="1"/>
</dbReference>
<dbReference type="SUPFAM" id="SSF52540">
    <property type="entry name" value="P-loop containing nucleoside triphosphate hydrolases"/>
    <property type="match status" value="1"/>
</dbReference>
<dbReference type="PROSITE" id="PS00410">
    <property type="entry name" value="G_DYNAMIN_1"/>
    <property type="match status" value="1"/>
</dbReference>
<dbReference type="PROSITE" id="PS51718">
    <property type="entry name" value="G_DYNAMIN_2"/>
    <property type="match status" value="1"/>
</dbReference>
<dbReference type="PROSITE" id="PS51388">
    <property type="entry name" value="GED"/>
    <property type="match status" value="1"/>
</dbReference>
<evidence type="ECO:0000255" key="1"/>
<evidence type="ECO:0000255" key="2">
    <source>
        <dbReference type="PROSITE-ProRule" id="PRU00720"/>
    </source>
</evidence>
<evidence type="ECO:0000255" key="3">
    <source>
        <dbReference type="PROSITE-ProRule" id="PRU01055"/>
    </source>
</evidence>
<evidence type="ECO:0000256" key="4">
    <source>
        <dbReference type="SAM" id="MobiDB-lite"/>
    </source>
</evidence>
<evidence type="ECO:0000269" key="5">
    <source>
    </source>
</evidence>
<evidence type="ECO:0000269" key="6">
    <source>
    </source>
</evidence>
<evidence type="ECO:0000269" key="7">
    <source>
    </source>
</evidence>
<evidence type="ECO:0000305" key="8"/>
<name>MX2_MOUSE</name>
<accession>Q9WVP9</accession>
<accession>Q922L4</accession>
<protein>
    <recommendedName>
        <fullName>Interferon-induced GTP-binding protein Mx2</fullName>
    </recommendedName>
    <alternativeName>
        <fullName>Myxovirus resistance protein 2</fullName>
    </alternativeName>
</protein>
<organism>
    <name type="scientific">Mus musculus</name>
    <name type="common">Mouse</name>
    <dbReference type="NCBI Taxonomy" id="10090"/>
    <lineage>
        <taxon>Eukaryota</taxon>
        <taxon>Metazoa</taxon>
        <taxon>Chordata</taxon>
        <taxon>Craniata</taxon>
        <taxon>Vertebrata</taxon>
        <taxon>Euteleostomi</taxon>
        <taxon>Mammalia</taxon>
        <taxon>Eutheria</taxon>
        <taxon>Euarchontoglires</taxon>
        <taxon>Glires</taxon>
        <taxon>Rodentia</taxon>
        <taxon>Myomorpha</taxon>
        <taxon>Muroidea</taxon>
        <taxon>Muridae</taxon>
        <taxon>Murinae</taxon>
        <taxon>Mus</taxon>
        <taxon>Mus</taxon>
    </lineage>
</organism>
<reference key="1">
    <citation type="journal article" date="1999" name="J. Virol.">
        <title>Identification of the murine Mx2 gene: interferon-induced expression of the Mx2 protein from the feral mouse gene confers resistance to vesicular stomatitis virus.</title>
        <authorList>
            <person name="Jin H."/>
            <person name="Takada A."/>
            <person name="Kon Y."/>
            <person name="Haller O."/>
            <person name="Watanabe T."/>
        </authorList>
    </citation>
    <scope>NUCLEOTIDE SEQUENCE [MRNA]</scope>
    <scope>FUNCTION</scope>
    <scope>SUBCELLULAR LOCATION</scope>
    <scope>INDUCTION</scope>
    <source>
        <strain>NJL</strain>
    </source>
</reference>
<reference key="2">
    <citation type="journal article" date="2004" name="Genome Res.">
        <title>The status, quality, and expansion of the NIH full-length cDNA project: the Mammalian Gene Collection (MGC).</title>
        <authorList>
            <consortium name="The MGC Project Team"/>
        </authorList>
    </citation>
    <scope>NUCLEOTIDE SEQUENCE [LARGE SCALE MRNA]</scope>
    <source>
        <strain>Czech II</strain>
        <tissue>Mammary tumor</tissue>
    </source>
</reference>
<reference key="3">
    <citation type="journal article" date="2001" name="Arch. Virol.">
        <title>Mouse Mx2 protein inhibits hantavirus but not influenza virus replication.</title>
        <authorList>
            <person name="Jin H.K."/>
            <person name="Yoshimatsu K."/>
            <person name="Takada A."/>
            <person name="Ogino M."/>
            <person name="Asano A."/>
            <person name="Arikawa J."/>
            <person name="Watanabe T."/>
        </authorList>
    </citation>
    <scope>FUNCTION</scope>
</reference>
<reference key="4">
    <citation type="journal article" date="2007" name="Microbes Infect.">
        <title>The Mx GTPase family of interferon-induced antiviral proteins.</title>
        <authorList>
            <person name="Haller O."/>
            <person name="Stertz S."/>
            <person name="Kochs G."/>
        </authorList>
    </citation>
    <scope>REVIEW</scope>
    <scope>INDUCTION</scope>
</reference>
<gene>
    <name type="primary">Mx2</name>
</gene>
<comment type="function">
    <text evidence="5 6">Interferon-induced dynamin-like GTPase with antiviral activity against vesicular stomatitis virus (VSV) and Hantaan virus (HNTV).</text>
</comment>
<comment type="subcellular location">
    <subcellularLocation>
        <location evidence="5">Cytoplasm</location>
    </subcellularLocation>
</comment>
<comment type="induction">
    <text evidence="5 7">By type I and type III interferons.</text>
</comment>
<comment type="miscellaneous">
    <text>The Mx2 gene is non-functional in all laboratory mouse strains examined. It is functional in feral strains.</text>
</comment>
<comment type="similarity">
    <text evidence="3">Belongs to the TRAFAC class dynamin-like GTPase superfamily. Dynamin/Fzo/YdjA family.</text>
</comment>
<proteinExistence type="evidence at transcript level"/>